<organism>
    <name type="scientific">Perodicticus potto edwarsi</name>
    <name type="common">Potto</name>
    <dbReference type="NCBI Taxonomy" id="9473"/>
    <lineage>
        <taxon>Eukaryota</taxon>
        <taxon>Metazoa</taxon>
        <taxon>Chordata</taxon>
        <taxon>Craniata</taxon>
        <taxon>Vertebrata</taxon>
        <taxon>Euteleostomi</taxon>
        <taxon>Mammalia</taxon>
        <taxon>Eutheria</taxon>
        <taxon>Euarchontoglires</taxon>
        <taxon>Primates</taxon>
        <taxon>Strepsirrhini</taxon>
        <taxon>Lorisiformes</taxon>
        <taxon>Lorisidae</taxon>
        <taxon>Perodicticus</taxon>
    </lineage>
</organism>
<gene>
    <name type="primary">PAX9</name>
</gene>
<accession>Q2VL54</accession>
<proteinExistence type="inferred from homology"/>
<feature type="chain" id="PRO_0000050210" description="Paired box protein Pax-9">
    <location>
        <begin position="1"/>
        <end position="341"/>
    </location>
</feature>
<feature type="DNA-binding region" description="Paired" evidence="2">
    <location>
        <begin position="4"/>
        <end position="130"/>
    </location>
</feature>
<feature type="region of interest" description="PAI subdomain" evidence="2">
    <location>
        <begin position="7"/>
        <end position="63"/>
    </location>
</feature>
<feature type="region of interest" description="RED subdomain" evidence="2">
    <location>
        <begin position="82"/>
        <end position="130"/>
    </location>
</feature>
<feature type="region of interest" description="Interaction with KDM5B" evidence="1">
    <location>
        <begin position="168"/>
        <end position="189"/>
    </location>
</feature>
<reference key="1">
    <citation type="journal article" date="2006" name="Mol. Biol. Evol.">
        <title>Molecular evolution of the primate developmental genes MSX1 and PAX9.</title>
        <authorList>
            <person name="Perry G.H."/>
            <person name="Verrelli B.C."/>
            <person name="Stone A.C."/>
        </authorList>
    </citation>
    <scope>NUCLEOTIDE SEQUENCE [GENOMIC DNA]</scope>
    <source>
        <strain>Isolate 932</strain>
    </source>
</reference>
<name>PAX9_PERPO</name>
<comment type="function">
    <text evidence="1">Transcription factor required for normal development of thymus, parathyroid glands, ultimobranchial bodies, teeth, skeletal elements of skull and larynx as well as distal limbs.</text>
</comment>
<comment type="subunit">
    <text evidence="1">Interacts with KDM5B.</text>
</comment>
<comment type="subcellular location">
    <subcellularLocation>
        <location>Nucleus</location>
    </subcellularLocation>
</comment>
<dbReference type="EMBL" id="DQ067531">
    <property type="protein sequence ID" value="AAZ39862.1"/>
    <property type="molecule type" value="Genomic_DNA"/>
</dbReference>
<dbReference type="EMBL" id="DQ067529">
    <property type="protein sequence ID" value="AAZ39862.1"/>
    <property type="status" value="JOINED"/>
    <property type="molecule type" value="Genomic_DNA"/>
</dbReference>
<dbReference type="EMBL" id="DQ067530">
    <property type="protein sequence ID" value="AAZ39862.1"/>
    <property type="status" value="JOINED"/>
    <property type="molecule type" value="Genomic_DNA"/>
</dbReference>
<dbReference type="SMR" id="Q2VL54"/>
<dbReference type="GO" id="GO:0005634">
    <property type="term" value="C:nucleus"/>
    <property type="evidence" value="ECO:0007669"/>
    <property type="project" value="UniProtKB-SubCell"/>
</dbReference>
<dbReference type="GO" id="GO:0000981">
    <property type="term" value="F:DNA-binding transcription factor activity, RNA polymerase II-specific"/>
    <property type="evidence" value="ECO:0007669"/>
    <property type="project" value="TreeGrafter"/>
</dbReference>
<dbReference type="GO" id="GO:0000978">
    <property type="term" value="F:RNA polymerase II cis-regulatory region sequence-specific DNA binding"/>
    <property type="evidence" value="ECO:0007669"/>
    <property type="project" value="TreeGrafter"/>
</dbReference>
<dbReference type="CDD" id="cd00131">
    <property type="entry name" value="PAX"/>
    <property type="match status" value="1"/>
</dbReference>
<dbReference type="FunFam" id="1.10.10.10:FF:000003">
    <property type="entry name" value="Paired box protein Pax-6"/>
    <property type="match status" value="1"/>
</dbReference>
<dbReference type="FunFam" id="1.10.10.10:FF:000084">
    <property type="entry name" value="paired box protein Pax-9"/>
    <property type="match status" value="1"/>
</dbReference>
<dbReference type="Gene3D" id="1.10.10.10">
    <property type="entry name" value="Winged helix-like DNA-binding domain superfamily/Winged helix DNA-binding domain"/>
    <property type="match status" value="2"/>
</dbReference>
<dbReference type="InterPro" id="IPR009057">
    <property type="entry name" value="Homeodomain-like_sf"/>
</dbReference>
<dbReference type="InterPro" id="IPR043182">
    <property type="entry name" value="PAIRED_DNA-bd_dom"/>
</dbReference>
<dbReference type="InterPro" id="IPR001523">
    <property type="entry name" value="Paired_dom"/>
</dbReference>
<dbReference type="InterPro" id="IPR043565">
    <property type="entry name" value="PAX_fam"/>
</dbReference>
<dbReference type="InterPro" id="IPR036388">
    <property type="entry name" value="WH-like_DNA-bd_sf"/>
</dbReference>
<dbReference type="PANTHER" id="PTHR45636">
    <property type="entry name" value="PAIRED BOX PROTEIN PAX-6-RELATED-RELATED"/>
    <property type="match status" value="1"/>
</dbReference>
<dbReference type="PANTHER" id="PTHR45636:SF13">
    <property type="entry name" value="PAIRED BOX PROTEIN PAX-9"/>
    <property type="match status" value="1"/>
</dbReference>
<dbReference type="Pfam" id="PF00292">
    <property type="entry name" value="PAX"/>
    <property type="match status" value="1"/>
</dbReference>
<dbReference type="PRINTS" id="PR00027">
    <property type="entry name" value="PAIREDBOX"/>
</dbReference>
<dbReference type="SMART" id="SM00351">
    <property type="entry name" value="PAX"/>
    <property type="match status" value="1"/>
</dbReference>
<dbReference type="SUPFAM" id="SSF46689">
    <property type="entry name" value="Homeodomain-like"/>
    <property type="match status" value="1"/>
</dbReference>
<dbReference type="PROSITE" id="PS00034">
    <property type="entry name" value="PAIRED_1"/>
    <property type="match status" value="1"/>
</dbReference>
<dbReference type="PROSITE" id="PS51057">
    <property type="entry name" value="PAIRED_2"/>
    <property type="match status" value="1"/>
</dbReference>
<evidence type="ECO:0000250" key="1"/>
<evidence type="ECO:0000255" key="2">
    <source>
        <dbReference type="PROSITE-ProRule" id="PRU00381"/>
    </source>
</evidence>
<protein>
    <recommendedName>
        <fullName>Paired box protein Pax-9</fullName>
    </recommendedName>
</protein>
<keyword id="KW-0217">Developmental protein</keyword>
<keyword id="KW-0238">DNA-binding</keyword>
<keyword id="KW-0539">Nucleus</keyword>
<keyword id="KW-0563">Paired box</keyword>
<keyword id="KW-0804">Transcription</keyword>
<keyword id="KW-0805">Transcription regulation</keyword>
<sequence>MEPAFGEVNQLGGVFVNGRPLPNAIRLRIVELAQLGIRPCDISRQLRVSHGCVSKILARYNETGSILPGAIGGSKPRVTTPTVVKHIRTYKQRDPGIFAWEIRDRLLADGVCDKYNVPSVSSISRILRNKIGNLAQQGHYDSYKQHQPAPQPALPYNHIYSYPSPISAAAAKVPTPPGVPAIPGSVAMPRTWPSSHSVTDILGIRSITDQVSDSSPYHSPKVEEWSSLGRNNFPAAAPHAVNGLEKGALEQEAKYGQAPNGLPAVSSFVSASSMAPYPTPAQVSPYMTYSAAPSGYVAGHGWQHAGGTPLSPHNCDIPASLAFKGMQAAREGSHSVTASAL</sequence>